<sequence length="479" mass="54095">MLWETIVEENNCSMDCNISNNTSSSSSINKMSGSRRARRSLELMSMDQEELSFYDDDVVPQDQQRSASPELMGLLSPEGSPQRFQIVRQPKILPAMGVSSDHTPARSFRIFNSLSSTCSMESSMDDEYMELFEMESQSQQTALGFPSGLNSLISGQIKEQPAAKSPAGLSMRRPSVRRCLSMTESNTNSTTTPPPKTPETARDCFKRPEPPASANCSPIQSKRHRCAAVEKENCPAPSPLSQVTISHPPPLRKCMSLNDAEIMSALARSENRNEPELIGDFSKAYALPLMEGRHRDLKSISSETVARLLKGEFSDKVASYRIIDCRYPYEFEGGHIEGAKNLYTTEQILDEFLTVQQTELQQQQNAESGHKRNIIIFHCEFSSERGPKMSRFLRNLDRERNTNAYPALHYPEIYLLHNGYKEFFESHVELCEPHAYRTMLDPAYNEAYRHFRAKSKSWNGDGLGGATGRLKKSRSRLML</sequence>
<proteinExistence type="evidence at protein level"/>
<feature type="chain" id="PRO_0000198658" description="M-phase inducer phosphatase">
    <location>
        <begin position="1"/>
        <end position="479"/>
    </location>
</feature>
<feature type="domain" description="Rhodanese" evidence="2">
    <location>
        <begin position="316"/>
        <end position="432"/>
    </location>
</feature>
<feature type="region of interest" description="Disordered" evidence="3">
    <location>
        <begin position="182"/>
        <end position="218"/>
    </location>
</feature>
<feature type="compositionally biased region" description="Basic and acidic residues" evidence="3">
    <location>
        <begin position="199"/>
        <end position="209"/>
    </location>
</feature>
<feature type="active site" evidence="1">
    <location>
        <position position="379"/>
    </location>
</feature>
<feature type="modified residue" description="Phosphoserine" evidence="4">
    <location>
        <position position="455"/>
    </location>
</feature>
<feature type="sequence conflict" description="In Ref. 1; AAA28916." evidence="6" ref="1">
    <original>A</original>
    <variation>T</variation>
    <location>
        <position position="228"/>
    </location>
</feature>
<protein>
    <recommendedName>
        <fullName>M-phase inducer phosphatase</fullName>
        <ecNumber>3.1.3.48</ecNumber>
    </recommendedName>
    <alternativeName>
        <fullName>Cdc25-like protein</fullName>
    </alternativeName>
    <alternativeName>
        <fullName>Protein string</fullName>
    </alternativeName>
</protein>
<keyword id="KW-0131">Cell cycle</keyword>
<keyword id="KW-0132">Cell division</keyword>
<keyword id="KW-0378">Hydrolase</keyword>
<keyword id="KW-0498">Mitosis</keyword>
<keyword id="KW-0597">Phosphoprotein</keyword>
<keyword id="KW-0904">Protein phosphatase</keyword>
<keyword id="KW-1185">Reference proteome</keyword>
<dbReference type="EC" id="3.1.3.48"/>
<dbReference type="EMBL" id="M24909">
    <property type="protein sequence ID" value="AAA28916.1"/>
    <property type="molecule type" value="mRNA"/>
</dbReference>
<dbReference type="EMBL" id="X57495">
    <property type="protein sequence ID" value="CAA40732.1"/>
    <property type="molecule type" value="mRNA"/>
</dbReference>
<dbReference type="EMBL" id="AE014297">
    <property type="protein sequence ID" value="AAF56885.1"/>
    <property type="molecule type" value="Genomic_DNA"/>
</dbReference>
<dbReference type="EMBL" id="AY069704">
    <property type="protein sequence ID" value="AAL39849.1"/>
    <property type="molecule type" value="mRNA"/>
</dbReference>
<dbReference type="PIR" id="A32290">
    <property type="entry name" value="A32290"/>
</dbReference>
<dbReference type="RefSeq" id="NP_001263066.1">
    <property type="nucleotide sequence ID" value="NM_001276137.1"/>
</dbReference>
<dbReference type="RefSeq" id="NP_524547.1">
    <property type="nucleotide sequence ID" value="NM_079823.4"/>
</dbReference>
<dbReference type="SMR" id="P20483"/>
<dbReference type="BioGRID" id="68333">
    <property type="interactions" value="38"/>
</dbReference>
<dbReference type="DIP" id="DIP-19931N"/>
<dbReference type="FunCoup" id="P20483">
    <property type="interactions" value="523"/>
</dbReference>
<dbReference type="IntAct" id="P20483">
    <property type="interactions" value="5"/>
</dbReference>
<dbReference type="STRING" id="7227.FBpp0306890"/>
<dbReference type="iPTMnet" id="P20483"/>
<dbReference type="PaxDb" id="7227-FBpp0084766"/>
<dbReference type="DNASU" id="43466"/>
<dbReference type="EnsemblMetazoa" id="FBtr0085397">
    <property type="protein sequence ID" value="FBpp0084766"/>
    <property type="gene ID" value="FBgn0003525"/>
</dbReference>
<dbReference type="EnsemblMetazoa" id="FBtr0334867">
    <property type="protein sequence ID" value="FBpp0306890"/>
    <property type="gene ID" value="FBgn0003525"/>
</dbReference>
<dbReference type="GeneID" id="43466"/>
<dbReference type="KEGG" id="dme:Dmel_CG1395"/>
<dbReference type="AGR" id="FB:FBgn0003525"/>
<dbReference type="CTD" id="43466"/>
<dbReference type="FlyBase" id="FBgn0003525">
    <property type="gene designation" value="stg"/>
</dbReference>
<dbReference type="VEuPathDB" id="VectorBase:FBgn0003525"/>
<dbReference type="eggNOG" id="KOG3772">
    <property type="taxonomic scope" value="Eukaryota"/>
</dbReference>
<dbReference type="GeneTree" id="ENSGT00940000166659"/>
<dbReference type="HOGENOM" id="CLU_014464_3_1_1"/>
<dbReference type="InParanoid" id="P20483"/>
<dbReference type="OMA" id="LYTHEQI"/>
<dbReference type="OrthoDB" id="26523at2759"/>
<dbReference type="PhylomeDB" id="P20483"/>
<dbReference type="Reactome" id="R-DME-156711">
    <property type="pathway name" value="Polo-like kinase mediated events"/>
</dbReference>
<dbReference type="Reactome" id="R-DME-176187">
    <property type="pathway name" value="Activation of ATR in response to replication stress"/>
</dbReference>
<dbReference type="Reactome" id="R-DME-5625740">
    <property type="pathway name" value="RHO GTPases activate PKNs"/>
</dbReference>
<dbReference type="Reactome" id="R-DME-5689880">
    <property type="pathway name" value="Ub-specific processing proteases"/>
</dbReference>
<dbReference type="Reactome" id="R-DME-69202">
    <property type="pathway name" value="Cyclin E associated events during G1/S transition"/>
</dbReference>
<dbReference type="Reactome" id="R-DME-69273">
    <property type="pathway name" value="Cyclin A/B1/B2 associated events during G2/M transition"/>
</dbReference>
<dbReference type="Reactome" id="R-DME-69601">
    <property type="pathway name" value="Ubiquitin Mediated Degradation of Phosphorylated Cdc25A"/>
</dbReference>
<dbReference type="Reactome" id="R-DME-69656">
    <property type="pathway name" value="Cyclin A:Cdk2-associated events at S phase entry"/>
</dbReference>
<dbReference type="Reactome" id="R-DME-75035">
    <property type="pathway name" value="Chk1/Chk2(Cds1) mediated inactivation of Cyclin B:Cdk1 complex"/>
</dbReference>
<dbReference type="SignaLink" id="P20483"/>
<dbReference type="BioGRID-ORCS" id="43466">
    <property type="hits" value="0 hits in 3 CRISPR screens"/>
</dbReference>
<dbReference type="ChiTaRS" id="stg">
    <property type="organism name" value="fly"/>
</dbReference>
<dbReference type="GenomeRNAi" id="43466"/>
<dbReference type="PRO" id="PR:P20483"/>
<dbReference type="Proteomes" id="UP000000803">
    <property type="component" value="Chromosome 3R"/>
</dbReference>
<dbReference type="Bgee" id="FBgn0003525">
    <property type="expression patterns" value="Expressed in cleaving embryo and 111 other cell types or tissues"/>
</dbReference>
<dbReference type="ExpressionAtlas" id="P20483">
    <property type="expression patterns" value="baseline and differential"/>
</dbReference>
<dbReference type="GO" id="GO:0005694">
    <property type="term" value="C:chromosome"/>
    <property type="evidence" value="ECO:0000314"/>
    <property type="project" value="FlyBase"/>
</dbReference>
<dbReference type="GO" id="GO:0005737">
    <property type="term" value="C:cytoplasm"/>
    <property type="evidence" value="ECO:0000318"/>
    <property type="project" value="GO_Central"/>
</dbReference>
<dbReference type="GO" id="GO:0005634">
    <property type="term" value="C:nucleus"/>
    <property type="evidence" value="ECO:0000314"/>
    <property type="project" value="FlyBase"/>
</dbReference>
<dbReference type="GO" id="GO:0004725">
    <property type="term" value="F:protein tyrosine phosphatase activity"/>
    <property type="evidence" value="ECO:0000314"/>
    <property type="project" value="FlyBase"/>
</dbReference>
<dbReference type="GO" id="GO:0051301">
    <property type="term" value="P:cell division"/>
    <property type="evidence" value="ECO:0007669"/>
    <property type="project" value="UniProtKB-KW"/>
</dbReference>
<dbReference type="GO" id="GO:0007099">
    <property type="term" value="P:centriole replication"/>
    <property type="evidence" value="ECO:0000315"/>
    <property type="project" value="FlyBase"/>
</dbReference>
<dbReference type="GO" id="GO:0000086">
    <property type="term" value="P:G2/M transition of mitotic cell cycle"/>
    <property type="evidence" value="ECO:0000315"/>
    <property type="project" value="FlyBase"/>
</dbReference>
<dbReference type="GO" id="GO:0007369">
    <property type="term" value="P:gastrulation"/>
    <property type="evidence" value="ECO:0000315"/>
    <property type="project" value="FlyBase"/>
</dbReference>
<dbReference type="GO" id="GO:0007030">
    <property type="term" value="P:Golgi organization"/>
    <property type="evidence" value="ECO:0000315"/>
    <property type="project" value="FlyBase"/>
</dbReference>
<dbReference type="GO" id="GO:0007488">
    <property type="term" value="P:histoblast morphogenesis"/>
    <property type="evidence" value="ECO:0000315"/>
    <property type="project" value="FlyBase"/>
</dbReference>
<dbReference type="GO" id="GO:0045792">
    <property type="term" value="P:negative regulation of cell size"/>
    <property type="evidence" value="ECO:0000315"/>
    <property type="project" value="FlyBase"/>
</dbReference>
<dbReference type="GO" id="GO:0008284">
    <property type="term" value="P:positive regulation of cell population proliferation"/>
    <property type="evidence" value="ECO:0000315"/>
    <property type="project" value="FlyBase"/>
</dbReference>
<dbReference type="GO" id="GO:0010971">
    <property type="term" value="P:positive regulation of G2/M transition of mitotic cell cycle"/>
    <property type="evidence" value="ECO:0000318"/>
    <property type="project" value="GO_Central"/>
</dbReference>
<dbReference type="GO" id="GO:0110032">
    <property type="term" value="P:positive regulation of G2/MI transition of meiotic cell cycle"/>
    <property type="evidence" value="ECO:0000318"/>
    <property type="project" value="GO_Central"/>
</dbReference>
<dbReference type="GO" id="GO:0045931">
    <property type="term" value="P:positive regulation of mitotic cell cycle"/>
    <property type="evidence" value="ECO:0000315"/>
    <property type="project" value="FlyBase"/>
</dbReference>
<dbReference type="GO" id="GO:0045977">
    <property type="term" value="P:positive regulation of mitotic cell cycle, embryonic"/>
    <property type="evidence" value="ECO:0000315"/>
    <property type="project" value="FlyBase"/>
</dbReference>
<dbReference type="GO" id="GO:0007346">
    <property type="term" value="P:regulation of mitotic cell cycle"/>
    <property type="evidence" value="ECO:0000315"/>
    <property type="project" value="FlyBase"/>
</dbReference>
<dbReference type="CDD" id="cd01530">
    <property type="entry name" value="Cdc25"/>
    <property type="match status" value="1"/>
</dbReference>
<dbReference type="FunFam" id="3.40.250.10:FF:000036">
    <property type="entry name" value="M-phase inducer phosphatase"/>
    <property type="match status" value="1"/>
</dbReference>
<dbReference type="Gene3D" id="3.40.250.10">
    <property type="entry name" value="Rhodanese-like domain"/>
    <property type="match status" value="1"/>
</dbReference>
<dbReference type="InterPro" id="IPR000751">
    <property type="entry name" value="MPI_Phosphatase"/>
</dbReference>
<dbReference type="InterPro" id="IPR001763">
    <property type="entry name" value="Rhodanese-like_dom"/>
</dbReference>
<dbReference type="InterPro" id="IPR036873">
    <property type="entry name" value="Rhodanese-like_dom_sf"/>
</dbReference>
<dbReference type="PANTHER" id="PTHR10828:SF76">
    <property type="entry name" value="M-PHASE INDUCER PHOSPHATASE"/>
    <property type="match status" value="1"/>
</dbReference>
<dbReference type="PANTHER" id="PTHR10828">
    <property type="entry name" value="M-PHASE INDUCER PHOSPHATASE DUAL SPECIFICITY PHOSPHATASE CDC25"/>
    <property type="match status" value="1"/>
</dbReference>
<dbReference type="Pfam" id="PF00581">
    <property type="entry name" value="Rhodanese"/>
    <property type="match status" value="1"/>
</dbReference>
<dbReference type="PRINTS" id="PR00716">
    <property type="entry name" value="MPIPHPHTASE"/>
</dbReference>
<dbReference type="SMART" id="SM00450">
    <property type="entry name" value="RHOD"/>
    <property type="match status" value="1"/>
</dbReference>
<dbReference type="SUPFAM" id="SSF52821">
    <property type="entry name" value="Rhodanese/Cell cycle control phosphatase"/>
    <property type="match status" value="1"/>
</dbReference>
<dbReference type="PROSITE" id="PS50206">
    <property type="entry name" value="RHODANESE_3"/>
    <property type="match status" value="1"/>
</dbReference>
<accession>P20483</accession>
<accession>Q9VAL9</accession>
<comment type="function">
    <text>This protein functions as a dosage-dependent inducer in mitotic control. It is a tyrosine protein phosphatase required for progression of the cell cycle. It may directly dephosphorylate Cdk1 and activate the Cdk1 activity.</text>
</comment>
<comment type="catalytic activity">
    <reaction>
        <text>O-phospho-L-tyrosyl-[protein] + H2O = L-tyrosyl-[protein] + phosphate</text>
        <dbReference type="Rhea" id="RHEA:10684"/>
        <dbReference type="Rhea" id="RHEA-COMP:10136"/>
        <dbReference type="Rhea" id="RHEA-COMP:20101"/>
        <dbReference type="ChEBI" id="CHEBI:15377"/>
        <dbReference type="ChEBI" id="CHEBI:43474"/>
        <dbReference type="ChEBI" id="CHEBI:46858"/>
        <dbReference type="ChEBI" id="CHEBI:61978"/>
        <dbReference type="EC" id="3.1.3.48"/>
    </reaction>
</comment>
<comment type="disruption phenotype">
    <text evidence="5">RNAi-mediated knockdown in gut progenitor cells blocks intestinal stem cell proliferation induced by bacterial infection but does not block induction of the TNF egr.</text>
</comment>
<comment type="similarity">
    <text evidence="6">Belongs to the MPI phosphatase family.</text>
</comment>
<gene>
    <name type="primary">stg</name>
    <name type="synonym">cdc25</name>
    <name type="ORF">CG1395</name>
</gene>
<organism>
    <name type="scientific">Drosophila melanogaster</name>
    <name type="common">Fruit fly</name>
    <dbReference type="NCBI Taxonomy" id="7227"/>
    <lineage>
        <taxon>Eukaryota</taxon>
        <taxon>Metazoa</taxon>
        <taxon>Ecdysozoa</taxon>
        <taxon>Arthropoda</taxon>
        <taxon>Hexapoda</taxon>
        <taxon>Insecta</taxon>
        <taxon>Pterygota</taxon>
        <taxon>Neoptera</taxon>
        <taxon>Endopterygota</taxon>
        <taxon>Diptera</taxon>
        <taxon>Brachycera</taxon>
        <taxon>Muscomorpha</taxon>
        <taxon>Ephydroidea</taxon>
        <taxon>Drosophilidae</taxon>
        <taxon>Drosophila</taxon>
        <taxon>Sophophora</taxon>
    </lineage>
</organism>
<reference key="1">
    <citation type="journal article" date="1989" name="Cell">
        <title>Genetic control of cell division patterns in the Drosophila embryo.</title>
        <authorList>
            <person name="Edgar B.A."/>
            <person name="O'Farrell P.H."/>
        </authorList>
    </citation>
    <scope>NUCLEOTIDE SEQUENCE [MRNA]</scope>
</reference>
<reference key="2">
    <citation type="journal article" date="1990" name="EMBO J.">
        <title>Complementation of fission yeast cdc2ts and cdc25ts mutants identifies two cell cycle genes from Drosophila: a cdc2 homologue and string.</title>
        <authorList>
            <person name="Jimenez J."/>
            <person name="Alphey L."/>
            <person name="Nurse P."/>
            <person name="Glover D.M."/>
        </authorList>
    </citation>
    <scope>NUCLEOTIDE SEQUENCE [MRNA]</scope>
</reference>
<reference key="3">
    <citation type="journal article" date="2000" name="Science">
        <title>The genome sequence of Drosophila melanogaster.</title>
        <authorList>
            <person name="Adams M.D."/>
            <person name="Celniker S.E."/>
            <person name="Holt R.A."/>
            <person name="Evans C.A."/>
            <person name="Gocayne J.D."/>
            <person name="Amanatides P.G."/>
            <person name="Scherer S.E."/>
            <person name="Li P.W."/>
            <person name="Hoskins R.A."/>
            <person name="Galle R.F."/>
            <person name="George R.A."/>
            <person name="Lewis S.E."/>
            <person name="Richards S."/>
            <person name="Ashburner M."/>
            <person name="Henderson S.N."/>
            <person name="Sutton G.G."/>
            <person name="Wortman J.R."/>
            <person name="Yandell M.D."/>
            <person name="Zhang Q."/>
            <person name="Chen L.X."/>
            <person name="Brandon R.C."/>
            <person name="Rogers Y.-H.C."/>
            <person name="Blazej R.G."/>
            <person name="Champe M."/>
            <person name="Pfeiffer B.D."/>
            <person name="Wan K.H."/>
            <person name="Doyle C."/>
            <person name="Baxter E.G."/>
            <person name="Helt G."/>
            <person name="Nelson C.R."/>
            <person name="Miklos G.L.G."/>
            <person name="Abril J.F."/>
            <person name="Agbayani A."/>
            <person name="An H.-J."/>
            <person name="Andrews-Pfannkoch C."/>
            <person name="Baldwin D."/>
            <person name="Ballew R.M."/>
            <person name="Basu A."/>
            <person name="Baxendale J."/>
            <person name="Bayraktaroglu L."/>
            <person name="Beasley E.M."/>
            <person name="Beeson K.Y."/>
            <person name="Benos P.V."/>
            <person name="Berman B.P."/>
            <person name="Bhandari D."/>
            <person name="Bolshakov S."/>
            <person name="Borkova D."/>
            <person name="Botchan M.R."/>
            <person name="Bouck J."/>
            <person name="Brokstein P."/>
            <person name="Brottier P."/>
            <person name="Burtis K.C."/>
            <person name="Busam D.A."/>
            <person name="Butler H."/>
            <person name="Cadieu E."/>
            <person name="Center A."/>
            <person name="Chandra I."/>
            <person name="Cherry J.M."/>
            <person name="Cawley S."/>
            <person name="Dahlke C."/>
            <person name="Davenport L.B."/>
            <person name="Davies P."/>
            <person name="de Pablos B."/>
            <person name="Delcher A."/>
            <person name="Deng Z."/>
            <person name="Mays A.D."/>
            <person name="Dew I."/>
            <person name="Dietz S.M."/>
            <person name="Dodson K."/>
            <person name="Doup L.E."/>
            <person name="Downes M."/>
            <person name="Dugan-Rocha S."/>
            <person name="Dunkov B.C."/>
            <person name="Dunn P."/>
            <person name="Durbin K.J."/>
            <person name="Evangelista C.C."/>
            <person name="Ferraz C."/>
            <person name="Ferriera S."/>
            <person name="Fleischmann W."/>
            <person name="Fosler C."/>
            <person name="Gabrielian A.E."/>
            <person name="Garg N.S."/>
            <person name="Gelbart W.M."/>
            <person name="Glasser K."/>
            <person name="Glodek A."/>
            <person name="Gong F."/>
            <person name="Gorrell J.H."/>
            <person name="Gu Z."/>
            <person name="Guan P."/>
            <person name="Harris M."/>
            <person name="Harris N.L."/>
            <person name="Harvey D.A."/>
            <person name="Heiman T.J."/>
            <person name="Hernandez J.R."/>
            <person name="Houck J."/>
            <person name="Hostin D."/>
            <person name="Houston K.A."/>
            <person name="Howland T.J."/>
            <person name="Wei M.-H."/>
            <person name="Ibegwam C."/>
            <person name="Jalali M."/>
            <person name="Kalush F."/>
            <person name="Karpen G.H."/>
            <person name="Ke Z."/>
            <person name="Kennison J.A."/>
            <person name="Ketchum K.A."/>
            <person name="Kimmel B.E."/>
            <person name="Kodira C.D."/>
            <person name="Kraft C.L."/>
            <person name="Kravitz S."/>
            <person name="Kulp D."/>
            <person name="Lai Z."/>
            <person name="Lasko P."/>
            <person name="Lei Y."/>
            <person name="Levitsky A.A."/>
            <person name="Li J.H."/>
            <person name="Li Z."/>
            <person name="Liang Y."/>
            <person name="Lin X."/>
            <person name="Liu X."/>
            <person name="Mattei B."/>
            <person name="McIntosh T.C."/>
            <person name="McLeod M.P."/>
            <person name="McPherson D."/>
            <person name="Merkulov G."/>
            <person name="Milshina N.V."/>
            <person name="Mobarry C."/>
            <person name="Morris J."/>
            <person name="Moshrefi A."/>
            <person name="Mount S.M."/>
            <person name="Moy M."/>
            <person name="Murphy B."/>
            <person name="Murphy L."/>
            <person name="Muzny D.M."/>
            <person name="Nelson D.L."/>
            <person name="Nelson D.R."/>
            <person name="Nelson K.A."/>
            <person name="Nixon K."/>
            <person name="Nusskern D.R."/>
            <person name="Pacleb J.M."/>
            <person name="Palazzolo M."/>
            <person name="Pittman G.S."/>
            <person name="Pan S."/>
            <person name="Pollard J."/>
            <person name="Puri V."/>
            <person name="Reese M.G."/>
            <person name="Reinert K."/>
            <person name="Remington K."/>
            <person name="Saunders R.D.C."/>
            <person name="Scheeler F."/>
            <person name="Shen H."/>
            <person name="Shue B.C."/>
            <person name="Siden-Kiamos I."/>
            <person name="Simpson M."/>
            <person name="Skupski M.P."/>
            <person name="Smith T.J."/>
            <person name="Spier E."/>
            <person name="Spradling A.C."/>
            <person name="Stapleton M."/>
            <person name="Strong R."/>
            <person name="Sun E."/>
            <person name="Svirskas R."/>
            <person name="Tector C."/>
            <person name="Turner R."/>
            <person name="Venter E."/>
            <person name="Wang A.H."/>
            <person name="Wang X."/>
            <person name="Wang Z.-Y."/>
            <person name="Wassarman D.A."/>
            <person name="Weinstock G.M."/>
            <person name="Weissenbach J."/>
            <person name="Williams S.M."/>
            <person name="Woodage T."/>
            <person name="Worley K.C."/>
            <person name="Wu D."/>
            <person name="Yang S."/>
            <person name="Yao Q.A."/>
            <person name="Ye J."/>
            <person name="Yeh R.-F."/>
            <person name="Zaveri J.S."/>
            <person name="Zhan M."/>
            <person name="Zhang G."/>
            <person name="Zhao Q."/>
            <person name="Zheng L."/>
            <person name="Zheng X.H."/>
            <person name="Zhong F.N."/>
            <person name="Zhong W."/>
            <person name="Zhou X."/>
            <person name="Zhu S.C."/>
            <person name="Zhu X."/>
            <person name="Smith H.O."/>
            <person name="Gibbs R.A."/>
            <person name="Myers E.W."/>
            <person name="Rubin G.M."/>
            <person name="Venter J.C."/>
        </authorList>
    </citation>
    <scope>NUCLEOTIDE SEQUENCE [LARGE SCALE GENOMIC DNA]</scope>
    <source>
        <strain>Berkeley</strain>
    </source>
</reference>
<reference key="4">
    <citation type="journal article" date="2002" name="Genome Biol.">
        <title>Annotation of the Drosophila melanogaster euchromatic genome: a systematic review.</title>
        <authorList>
            <person name="Misra S."/>
            <person name="Crosby M.A."/>
            <person name="Mungall C.J."/>
            <person name="Matthews B.B."/>
            <person name="Campbell K.S."/>
            <person name="Hradecky P."/>
            <person name="Huang Y."/>
            <person name="Kaminker J.S."/>
            <person name="Millburn G.H."/>
            <person name="Prochnik S.E."/>
            <person name="Smith C.D."/>
            <person name="Tupy J.L."/>
            <person name="Whitfield E.J."/>
            <person name="Bayraktaroglu L."/>
            <person name="Berman B.P."/>
            <person name="Bettencourt B.R."/>
            <person name="Celniker S.E."/>
            <person name="de Grey A.D.N.J."/>
            <person name="Drysdale R.A."/>
            <person name="Harris N.L."/>
            <person name="Richter J."/>
            <person name="Russo S."/>
            <person name="Schroeder A.J."/>
            <person name="Shu S.Q."/>
            <person name="Stapleton M."/>
            <person name="Yamada C."/>
            <person name="Ashburner M."/>
            <person name="Gelbart W.M."/>
            <person name="Rubin G.M."/>
            <person name="Lewis S.E."/>
        </authorList>
    </citation>
    <scope>GENOME REANNOTATION</scope>
    <source>
        <strain>Berkeley</strain>
    </source>
</reference>
<reference key="5">
    <citation type="journal article" date="2002" name="Genome Biol.">
        <title>A Drosophila full-length cDNA resource.</title>
        <authorList>
            <person name="Stapleton M."/>
            <person name="Carlson J.W."/>
            <person name="Brokstein P."/>
            <person name="Yu C."/>
            <person name="Champe M."/>
            <person name="George R.A."/>
            <person name="Guarin H."/>
            <person name="Kronmiller B."/>
            <person name="Pacleb J.M."/>
            <person name="Park S."/>
            <person name="Wan K.H."/>
            <person name="Rubin G.M."/>
            <person name="Celniker S.E."/>
        </authorList>
    </citation>
    <scope>NUCLEOTIDE SEQUENCE [LARGE SCALE MRNA]</scope>
    <source>
        <strain>Berkeley</strain>
        <tissue>Embryo</tissue>
    </source>
</reference>
<reference key="6">
    <citation type="journal article" date="2008" name="J. Proteome Res.">
        <title>Phosphoproteome analysis of Drosophila melanogaster embryos.</title>
        <authorList>
            <person name="Zhai B."/>
            <person name="Villen J."/>
            <person name="Beausoleil S.A."/>
            <person name="Mintseris J."/>
            <person name="Gygi S.P."/>
        </authorList>
    </citation>
    <scope>PHOSPHORYLATION [LARGE SCALE ANALYSIS] AT SER-455</scope>
    <scope>IDENTIFICATION BY MASS SPECTROMETRY</scope>
    <source>
        <tissue>Embryo</tissue>
    </source>
</reference>
<reference key="7">
    <citation type="journal article" date="2024" name="Nat. Commun.">
        <title>Inter-cell type interactions that control JNK signaling in the Drosophila intestine.</title>
        <authorList>
            <person name="Zhang P."/>
            <person name="Pronovost S.M."/>
            <person name="Marchetti M."/>
            <person name="Zhang C."/>
            <person name="Kang X."/>
            <person name="Kandelouei T."/>
            <person name="Li C."/>
            <person name="Edgar B.A."/>
        </authorList>
    </citation>
    <scope>DISRUPTION PHENOTYPE</scope>
</reference>
<name>MPIP_DROME</name>
<evidence type="ECO:0000250" key="1"/>
<evidence type="ECO:0000255" key="2">
    <source>
        <dbReference type="PROSITE-ProRule" id="PRU00173"/>
    </source>
</evidence>
<evidence type="ECO:0000256" key="3">
    <source>
        <dbReference type="SAM" id="MobiDB-lite"/>
    </source>
</evidence>
<evidence type="ECO:0000269" key="4">
    <source>
    </source>
</evidence>
<evidence type="ECO:0000269" key="5">
    <source>
    </source>
</evidence>
<evidence type="ECO:0000305" key="6"/>